<comment type="function">
    <text evidence="1">Catalyzes the conversion of 1-hydroxy-2-methyl-2-(E)-butenyl 4-diphosphate (HMBPP) into a mixture of isopentenyl diphosphate (IPP) and dimethylallyl diphosphate (DMAPP). Acts in the terminal step of the DOXP/MEP pathway for isoprenoid precursor biosynthesis.</text>
</comment>
<comment type="catalytic activity">
    <reaction evidence="1">
        <text>isopentenyl diphosphate + 2 oxidized [2Fe-2S]-[ferredoxin] + H2O = (2E)-4-hydroxy-3-methylbut-2-enyl diphosphate + 2 reduced [2Fe-2S]-[ferredoxin] + 2 H(+)</text>
        <dbReference type="Rhea" id="RHEA:24488"/>
        <dbReference type="Rhea" id="RHEA-COMP:10000"/>
        <dbReference type="Rhea" id="RHEA-COMP:10001"/>
        <dbReference type="ChEBI" id="CHEBI:15377"/>
        <dbReference type="ChEBI" id="CHEBI:15378"/>
        <dbReference type="ChEBI" id="CHEBI:33737"/>
        <dbReference type="ChEBI" id="CHEBI:33738"/>
        <dbReference type="ChEBI" id="CHEBI:128753"/>
        <dbReference type="ChEBI" id="CHEBI:128769"/>
        <dbReference type="EC" id="1.17.7.4"/>
    </reaction>
</comment>
<comment type="catalytic activity">
    <reaction evidence="1">
        <text>dimethylallyl diphosphate + 2 oxidized [2Fe-2S]-[ferredoxin] + H2O = (2E)-4-hydroxy-3-methylbut-2-enyl diphosphate + 2 reduced [2Fe-2S]-[ferredoxin] + 2 H(+)</text>
        <dbReference type="Rhea" id="RHEA:24825"/>
        <dbReference type="Rhea" id="RHEA-COMP:10000"/>
        <dbReference type="Rhea" id="RHEA-COMP:10001"/>
        <dbReference type="ChEBI" id="CHEBI:15377"/>
        <dbReference type="ChEBI" id="CHEBI:15378"/>
        <dbReference type="ChEBI" id="CHEBI:33737"/>
        <dbReference type="ChEBI" id="CHEBI:33738"/>
        <dbReference type="ChEBI" id="CHEBI:57623"/>
        <dbReference type="ChEBI" id="CHEBI:128753"/>
        <dbReference type="EC" id="1.17.7.4"/>
    </reaction>
</comment>
<comment type="cofactor">
    <cofactor evidence="1">
        <name>[4Fe-4S] cluster</name>
        <dbReference type="ChEBI" id="CHEBI:49883"/>
    </cofactor>
    <text evidence="1">Binds 1 [4Fe-4S] cluster per subunit.</text>
</comment>
<comment type="pathway">
    <text evidence="1">Isoprenoid biosynthesis; dimethylallyl diphosphate biosynthesis; dimethylallyl diphosphate from (2E)-4-hydroxy-3-methylbutenyl diphosphate: step 1/1.</text>
</comment>
<comment type="pathway">
    <text evidence="1">Isoprenoid biosynthesis; isopentenyl diphosphate biosynthesis via DXP pathway; isopentenyl diphosphate from 1-deoxy-D-xylulose 5-phosphate: step 6/6.</text>
</comment>
<comment type="similarity">
    <text evidence="1">Belongs to the IspH family.</text>
</comment>
<protein>
    <recommendedName>
        <fullName evidence="1">4-hydroxy-3-methylbut-2-enyl diphosphate reductase</fullName>
        <shortName evidence="1">HMBPP reductase</shortName>
        <ecNumber evidence="1">1.17.7.4</ecNumber>
    </recommendedName>
</protein>
<name>ISPH_WOLSU</name>
<gene>
    <name evidence="1" type="primary">ispH</name>
    <name type="ordered locus">WS1310</name>
</gene>
<evidence type="ECO:0000255" key="1">
    <source>
        <dbReference type="HAMAP-Rule" id="MF_00191"/>
    </source>
</evidence>
<dbReference type="EC" id="1.17.7.4" evidence="1"/>
<dbReference type="EMBL" id="BX571660">
    <property type="protein sequence ID" value="CAE10386.1"/>
    <property type="molecule type" value="Genomic_DNA"/>
</dbReference>
<dbReference type="RefSeq" id="WP_011139172.1">
    <property type="nucleotide sequence ID" value="NC_005090.1"/>
</dbReference>
<dbReference type="SMR" id="Q7M8Y6"/>
<dbReference type="STRING" id="273121.WS1310"/>
<dbReference type="KEGG" id="wsu:WS1310"/>
<dbReference type="eggNOG" id="COG0761">
    <property type="taxonomic scope" value="Bacteria"/>
</dbReference>
<dbReference type="HOGENOM" id="CLU_027486_0_1_7"/>
<dbReference type="UniPathway" id="UPA00056">
    <property type="reaction ID" value="UER00097"/>
</dbReference>
<dbReference type="UniPathway" id="UPA00059">
    <property type="reaction ID" value="UER00105"/>
</dbReference>
<dbReference type="Proteomes" id="UP000000422">
    <property type="component" value="Chromosome"/>
</dbReference>
<dbReference type="GO" id="GO:0051539">
    <property type="term" value="F:4 iron, 4 sulfur cluster binding"/>
    <property type="evidence" value="ECO:0007669"/>
    <property type="project" value="UniProtKB-UniRule"/>
</dbReference>
<dbReference type="GO" id="GO:0051745">
    <property type="term" value="F:4-hydroxy-3-methylbut-2-enyl diphosphate reductase activity"/>
    <property type="evidence" value="ECO:0007669"/>
    <property type="project" value="UniProtKB-UniRule"/>
</dbReference>
<dbReference type="GO" id="GO:0046872">
    <property type="term" value="F:metal ion binding"/>
    <property type="evidence" value="ECO:0007669"/>
    <property type="project" value="UniProtKB-KW"/>
</dbReference>
<dbReference type="GO" id="GO:0050992">
    <property type="term" value="P:dimethylallyl diphosphate biosynthetic process"/>
    <property type="evidence" value="ECO:0007669"/>
    <property type="project" value="UniProtKB-UniRule"/>
</dbReference>
<dbReference type="GO" id="GO:0019288">
    <property type="term" value="P:isopentenyl diphosphate biosynthetic process, methylerythritol 4-phosphate pathway"/>
    <property type="evidence" value="ECO:0007669"/>
    <property type="project" value="UniProtKB-UniRule"/>
</dbReference>
<dbReference type="GO" id="GO:0016114">
    <property type="term" value="P:terpenoid biosynthetic process"/>
    <property type="evidence" value="ECO:0007669"/>
    <property type="project" value="UniProtKB-UniRule"/>
</dbReference>
<dbReference type="CDD" id="cd13944">
    <property type="entry name" value="lytB_ispH"/>
    <property type="match status" value="1"/>
</dbReference>
<dbReference type="Gene3D" id="3.40.50.11270">
    <property type="match status" value="1"/>
</dbReference>
<dbReference type="Gene3D" id="3.40.1010.20">
    <property type="entry name" value="4-hydroxy-3-methylbut-2-enyl diphosphate reductase, catalytic domain"/>
    <property type="match status" value="2"/>
</dbReference>
<dbReference type="HAMAP" id="MF_00191">
    <property type="entry name" value="IspH"/>
    <property type="match status" value="1"/>
</dbReference>
<dbReference type="InterPro" id="IPR003451">
    <property type="entry name" value="LytB/IspH"/>
</dbReference>
<dbReference type="NCBIfam" id="TIGR00216">
    <property type="entry name" value="ispH_lytB"/>
    <property type="match status" value="1"/>
</dbReference>
<dbReference type="NCBIfam" id="NF002187">
    <property type="entry name" value="PRK01045.1-1"/>
    <property type="match status" value="1"/>
</dbReference>
<dbReference type="PANTHER" id="PTHR30426">
    <property type="entry name" value="4-HYDROXY-3-METHYLBUT-2-ENYL DIPHOSPHATE REDUCTASE"/>
    <property type="match status" value="1"/>
</dbReference>
<dbReference type="PANTHER" id="PTHR30426:SF0">
    <property type="entry name" value="4-HYDROXY-3-METHYLBUT-2-ENYL DIPHOSPHATE REDUCTASE"/>
    <property type="match status" value="1"/>
</dbReference>
<dbReference type="Pfam" id="PF02401">
    <property type="entry name" value="LYTB"/>
    <property type="match status" value="1"/>
</dbReference>
<accession>Q7M8Y6</accession>
<reference key="1">
    <citation type="journal article" date="2003" name="Proc. Natl. Acad. Sci. U.S.A.">
        <title>Complete genome sequence and analysis of Wolinella succinogenes.</title>
        <authorList>
            <person name="Baar C."/>
            <person name="Eppinger M."/>
            <person name="Raddatz G."/>
            <person name="Simon J."/>
            <person name="Lanz C."/>
            <person name="Klimmek O."/>
            <person name="Nandakumar R."/>
            <person name="Gross R."/>
            <person name="Rosinus A."/>
            <person name="Keller H."/>
            <person name="Jagtap P."/>
            <person name="Linke B."/>
            <person name="Meyer F."/>
            <person name="Lederer H."/>
            <person name="Schuster S.C."/>
        </authorList>
    </citation>
    <scope>NUCLEOTIDE SEQUENCE [LARGE SCALE GENOMIC DNA]</scope>
    <source>
        <strain>ATCC 29543 / DSM 1740 / CCUG 13145 / JCM 31913 / LMG 7466 / NCTC 11488 / FDC 602W</strain>
    </source>
</reference>
<keyword id="KW-0004">4Fe-4S</keyword>
<keyword id="KW-0408">Iron</keyword>
<keyword id="KW-0411">Iron-sulfur</keyword>
<keyword id="KW-0414">Isoprene biosynthesis</keyword>
<keyword id="KW-0479">Metal-binding</keyword>
<keyword id="KW-0560">Oxidoreductase</keyword>
<keyword id="KW-1185">Reference proteome</keyword>
<feature type="chain" id="PRO_0000128896" description="4-hydroxy-3-methylbut-2-enyl diphosphate reductase">
    <location>
        <begin position="1"/>
        <end position="276"/>
    </location>
</feature>
<feature type="active site" description="Proton donor" evidence="1">
    <location>
        <position position="122"/>
    </location>
</feature>
<feature type="binding site" evidence="1">
    <location>
        <position position="12"/>
    </location>
    <ligand>
        <name>[4Fe-4S] cluster</name>
        <dbReference type="ChEBI" id="CHEBI:49883"/>
    </ligand>
</feature>
<feature type="binding site" evidence="1">
    <location>
        <position position="36"/>
    </location>
    <ligand>
        <name>(2E)-4-hydroxy-3-methylbut-2-enyl diphosphate</name>
        <dbReference type="ChEBI" id="CHEBI:128753"/>
    </ligand>
</feature>
<feature type="binding site" evidence="1">
    <location>
        <position position="36"/>
    </location>
    <ligand>
        <name>dimethylallyl diphosphate</name>
        <dbReference type="ChEBI" id="CHEBI:57623"/>
    </ligand>
</feature>
<feature type="binding site" evidence="1">
    <location>
        <position position="36"/>
    </location>
    <ligand>
        <name>isopentenyl diphosphate</name>
        <dbReference type="ChEBI" id="CHEBI:128769"/>
    </ligand>
</feature>
<feature type="binding site" evidence="1">
    <location>
        <position position="70"/>
    </location>
    <ligand>
        <name>(2E)-4-hydroxy-3-methylbut-2-enyl diphosphate</name>
        <dbReference type="ChEBI" id="CHEBI:128753"/>
    </ligand>
</feature>
<feature type="binding site" evidence="1">
    <location>
        <position position="70"/>
    </location>
    <ligand>
        <name>dimethylallyl diphosphate</name>
        <dbReference type="ChEBI" id="CHEBI:57623"/>
    </ligand>
</feature>
<feature type="binding site" evidence="1">
    <location>
        <position position="70"/>
    </location>
    <ligand>
        <name>isopentenyl diphosphate</name>
        <dbReference type="ChEBI" id="CHEBI:128769"/>
    </ligand>
</feature>
<feature type="binding site" evidence="1">
    <location>
        <position position="92"/>
    </location>
    <ligand>
        <name>[4Fe-4S] cluster</name>
        <dbReference type="ChEBI" id="CHEBI:49883"/>
    </ligand>
</feature>
<feature type="binding site" evidence="1">
    <location>
        <position position="120"/>
    </location>
    <ligand>
        <name>(2E)-4-hydroxy-3-methylbut-2-enyl diphosphate</name>
        <dbReference type="ChEBI" id="CHEBI:128753"/>
    </ligand>
</feature>
<feature type="binding site" evidence="1">
    <location>
        <position position="120"/>
    </location>
    <ligand>
        <name>dimethylallyl diphosphate</name>
        <dbReference type="ChEBI" id="CHEBI:57623"/>
    </ligand>
</feature>
<feature type="binding site" evidence="1">
    <location>
        <position position="120"/>
    </location>
    <ligand>
        <name>isopentenyl diphosphate</name>
        <dbReference type="ChEBI" id="CHEBI:128769"/>
    </ligand>
</feature>
<feature type="binding site" evidence="1">
    <location>
        <position position="158"/>
    </location>
    <ligand>
        <name>(2E)-4-hydroxy-3-methylbut-2-enyl diphosphate</name>
        <dbReference type="ChEBI" id="CHEBI:128753"/>
    </ligand>
</feature>
<feature type="binding site" evidence="1">
    <location>
        <position position="186"/>
    </location>
    <ligand>
        <name>[4Fe-4S] cluster</name>
        <dbReference type="ChEBI" id="CHEBI:49883"/>
    </ligand>
</feature>
<feature type="binding site" evidence="1">
    <location>
        <position position="214"/>
    </location>
    <ligand>
        <name>(2E)-4-hydroxy-3-methylbut-2-enyl diphosphate</name>
        <dbReference type="ChEBI" id="CHEBI:128753"/>
    </ligand>
</feature>
<feature type="binding site" evidence="1">
    <location>
        <position position="214"/>
    </location>
    <ligand>
        <name>dimethylallyl diphosphate</name>
        <dbReference type="ChEBI" id="CHEBI:57623"/>
    </ligand>
</feature>
<feature type="binding site" evidence="1">
    <location>
        <position position="214"/>
    </location>
    <ligand>
        <name>isopentenyl diphosphate</name>
        <dbReference type="ChEBI" id="CHEBI:128769"/>
    </ligand>
</feature>
<feature type="binding site" evidence="1">
    <location>
        <position position="215"/>
    </location>
    <ligand>
        <name>(2E)-4-hydroxy-3-methylbut-2-enyl diphosphate</name>
        <dbReference type="ChEBI" id="CHEBI:128753"/>
    </ligand>
</feature>
<feature type="binding site" evidence="1">
    <location>
        <position position="215"/>
    </location>
    <ligand>
        <name>dimethylallyl diphosphate</name>
        <dbReference type="ChEBI" id="CHEBI:57623"/>
    </ligand>
</feature>
<feature type="binding site" evidence="1">
    <location>
        <position position="215"/>
    </location>
    <ligand>
        <name>isopentenyl diphosphate</name>
        <dbReference type="ChEBI" id="CHEBI:128769"/>
    </ligand>
</feature>
<feature type="binding site" evidence="1">
    <location>
        <position position="216"/>
    </location>
    <ligand>
        <name>(2E)-4-hydroxy-3-methylbut-2-enyl diphosphate</name>
        <dbReference type="ChEBI" id="CHEBI:128753"/>
    </ligand>
</feature>
<feature type="binding site" evidence="1">
    <location>
        <position position="216"/>
    </location>
    <ligand>
        <name>dimethylallyl diphosphate</name>
        <dbReference type="ChEBI" id="CHEBI:57623"/>
    </ligand>
</feature>
<feature type="binding site" evidence="1">
    <location>
        <position position="216"/>
    </location>
    <ligand>
        <name>isopentenyl diphosphate</name>
        <dbReference type="ChEBI" id="CHEBI:128769"/>
    </ligand>
</feature>
<feature type="binding site" evidence="1">
    <location>
        <position position="258"/>
    </location>
    <ligand>
        <name>(2E)-4-hydroxy-3-methylbut-2-enyl diphosphate</name>
        <dbReference type="ChEBI" id="CHEBI:128753"/>
    </ligand>
</feature>
<feature type="binding site" evidence="1">
    <location>
        <position position="258"/>
    </location>
    <ligand>
        <name>dimethylallyl diphosphate</name>
        <dbReference type="ChEBI" id="CHEBI:57623"/>
    </ligand>
</feature>
<feature type="binding site" evidence="1">
    <location>
        <position position="258"/>
    </location>
    <ligand>
        <name>isopentenyl diphosphate</name>
        <dbReference type="ChEBI" id="CHEBI:128769"/>
    </ligand>
</feature>
<organism>
    <name type="scientific">Wolinella succinogenes (strain ATCC 29543 / DSM 1740 / CCUG 13145 / JCM 31913 / LMG 7466 / NCTC 11488 / FDC 602W)</name>
    <name type="common">Vibrio succinogenes</name>
    <dbReference type="NCBI Taxonomy" id="273121"/>
    <lineage>
        <taxon>Bacteria</taxon>
        <taxon>Pseudomonadati</taxon>
        <taxon>Campylobacterota</taxon>
        <taxon>Epsilonproteobacteria</taxon>
        <taxon>Campylobacterales</taxon>
        <taxon>Helicobacteraceae</taxon>
        <taxon>Wolinella</taxon>
    </lineage>
</organism>
<proteinExistence type="inferred from homology"/>
<sequence length="276" mass="30653">MKVKLADKHGFCFGVKRAIKLAESHQGGITLGPLIHNKKEIERLKNDFGVTVEESVENLPRGSEVIIRTHGIPKDDLAKLTQSAEKIIDATCPFVTKPQKICEIMSQEGYQIIIFGDINHPEVQGVMSYSSSEPIVVMSPKELFGAKLKEKVALVSQTTKKIEDFLGVASFLVQRCAEVRIFNTICNATFDNQEAARHLSQEVDIMIIAGGKNSSNTKQLLSICLEHCQDSYLIEDESELDPQWFTNKKTCGVTAGASTPEWIIERVVRTIEGYKG</sequence>